<evidence type="ECO:0000255" key="1">
    <source>
        <dbReference type="HAMAP-Rule" id="MF_00158"/>
    </source>
</evidence>
<sequence length="291" mass="31891">MRTISTIADLREALAEHRRAGRSIGLVPTMGYLHVGHMELVRRAGSENDVVVASIFVNPLQFGANEDLGKYPRDLARDQALLTDGGVDFLFAPGVSDMYPRPMETVVDVPKLGSELEGAVRPGHFAGVATVVTKLFNIVQPDRAYFGEKDFQQLQIIRRMVEDLAQPVTVIGVPTVREEDGLACSSRNVYLTTQERRAAAIVPKALDEAERLIASGVTEPAEVEKRVLEFLAGEPLARPEVVALRDPETLGPVSEIEEKPVLLLLFVRFGTTKLLDNRVIAPKSARFAKVA</sequence>
<proteinExistence type="inferred from homology"/>
<feature type="chain" id="PRO_0000128262" description="Pantothenate synthetase">
    <location>
        <begin position="1"/>
        <end position="291"/>
    </location>
</feature>
<feature type="active site" description="Proton donor" evidence="1">
    <location>
        <position position="37"/>
    </location>
</feature>
<feature type="binding site" evidence="1">
    <location>
        <begin position="30"/>
        <end position="37"/>
    </location>
    <ligand>
        <name>ATP</name>
        <dbReference type="ChEBI" id="CHEBI:30616"/>
    </ligand>
</feature>
<feature type="binding site" evidence="1">
    <location>
        <position position="61"/>
    </location>
    <ligand>
        <name>(R)-pantoate</name>
        <dbReference type="ChEBI" id="CHEBI:15980"/>
    </ligand>
</feature>
<feature type="binding site" evidence="1">
    <location>
        <position position="61"/>
    </location>
    <ligand>
        <name>beta-alanine</name>
        <dbReference type="ChEBI" id="CHEBI:57966"/>
    </ligand>
</feature>
<feature type="binding site" evidence="1">
    <location>
        <begin position="147"/>
        <end position="150"/>
    </location>
    <ligand>
        <name>ATP</name>
        <dbReference type="ChEBI" id="CHEBI:30616"/>
    </ligand>
</feature>
<feature type="binding site" evidence="1">
    <location>
        <position position="153"/>
    </location>
    <ligand>
        <name>(R)-pantoate</name>
        <dbReference type="ChEBI" id="CHEBI:15980"/>
    </ligand>
</feature>
<feature type="binding site" evidence="1">
    <location>
        <position position="176"/>
    </location>
    <ligand>
        <name>ATP</name>
        <dbReference type="ChEBI" id="CHEBI:30616"/>
    </ligand>
</feature>
<feature type="binding site" evidence="1">
    <location>
        <begin position="184"/>
        <end position="187"/>
    </location>
    <ligand>
        <name>ATP</name>
        <dbReference type="ChEBI" id="CHEBI:30616"/>
    </ligand>
</feature>
<dbReference type="EC" id="6.3.2.1" evidence="1"/>
<dbReference type="EMBL" id="AL591688">
    <property type="protein sequence ID" value="CAC46741.1"/>
    <property type="molecule type" value="Genomic_DNA"/>
</dbReference>
<dbReference type="RefSeq" id="NP_386268.1">
    <property type="nucleotide sequence ID" value="NC_003047.1"/>
</dbReference>
<dbReference type="RefSeq" id="WP_010969736.1">
    <property type="nucleotide sequence ID" value="NC_003047.1"/>
</dbReference>
<dbReference type="SMR" id="Q92NN0"/>
<dbReference type="EnsemblBacteria" id="CAC46741">
    <property type="protein sequence ID" value="CAC46741"/>
    <property type="gene ID" value="SMc01880"/>
</dbReference>
<dbReference type="KEGG" id="sme:SMc01880"/>
<dbReference type="PATRIC" id="fig|266834.11.peg.3627"/>
<dbReference type="eggNOG" id="COG0414">
    <property type="taxonomic scope" value="Bacteria"/>
</dbReference>
<dbReference type="HOGENOM" id="CLU_047148_0_0_5"/>
<dbReference type="OrthoDB" id="9773087at2"/>
<dbReference type="UniPathway" id="UPA00028">
    <property type="reaction ID" value="UER00005"/>
</dbReference>
<dbReference type="Proteomes" id="UP000001976">
    <property type="component" value="Chromosome"/>
</dbReference>
<dbReference type="GO" id="GO:0005829">
    <property type="term" value="C:cytosol"/>
    <property type="evidence" value="ECO:0007669"/>
    <property type="project" value="TreeGrafter"/>
</dbReference>
<dbReference type="GO" id="GO:0005524">
    <property type="term" value="F:ATP binding"/>
    <property type="evidence" value="ECO:0007669"/>
    <property type="project" value="UniProtKB-KW"/>
</dbReference>
<dbReference type="GO" id="GO:0004592">
    <property type="term" value="F:pantoate-beta-alanine ligase activity"/>
    <property type="evidence" value="ECO:0007669"/>
    <property type="project" value="UniProtKB-UniRule"/>
</dbReference>
<dbReference type="GO" id="GO:0015940">
    <property type="term" value="P:pantothenate biosynthetic process"/>
    <property type="evidence" value="ECO:0007669"/>
    <property type="project" value="UniProtKB-UniRule"/>
</dbReference>
<dbReference type="CDD" id="cd00560">
    <property type="entry name" value="PanC"/>
    <property type="match status" value="1"/>
</dbReference>
<dbReference type="FunFam" id="3.40.50.620:FF:000013">
    <property type="entry name" value="Pantothenate synthetase"/>
    <property type="match status" value="1"/>
</dbReference>
<dbReference type="Gene3D" id="3.40.50.620">
    <property type="entry name" value="HUPs"/>
    <property type="match status" value="1"/>
</dbReference>
<dbReference type="Gene3D" id="3.30.1300.10">
    <property type="entry name" value="Pantoate-beta-alanine ligase, C-terminal domain"/>
    <property type="match status" value="1"/>
</dbReference>
<dbReference type="HAMAP" id="MF_00158">
    <property type="entry name" value="PanC"/>
    <property type="match status" value="1"/>
</dbReference>
<dbReference type="InterPro" id="IPR003721">
    <property type="entry name" value="Pantoate_ligase"/>
</dbReference>
<dbReference type="InterPro" id="IPR042176">
    <property type="entry name" value="Pantoate_ligase_C"/>
</dbReference>
<dbReference type="InterPro" id="IPR014729">
    <property type="entry name" value="Rossmann-like_a/b/a_fold"/>
</dbReference>
<dbReference type="NCBIfam" id="TIGR00018">
    <property type="entry name" value="panC"/>
    <property type="match status" value="1"/>
</dbReference>
<dbReference type="PANTHER" id="PTHR21299">
    <property type="entry name" value="CYTIDYLATE KINASE/PANTOATE-BETA-ALANINE LIGASE"/>
    <property type="match status" value="1"/>
</dbReference>
<dbReference type="PANTHER" id="PTHR21299:SF1">
    <property type="entry name" value="PANTOATE--BETA-ALANINE LIGASE"/>
    <property type="match status" value="1"/>
</dbReference>
<dbReference type="Pfam" id="PF02569">
    <property type="entry name" value="Pantoate_ligase"/>
    <property type="match status" value="1"/>
</dbReference>
<dbReference type="SUPFAM" id="SSF52374">
    <property type="entry name" value="Nucleotidylyl transferase"/>
    <property type="match status" value="1"/>
</dbReference>
<organism>
    <name type="scientific">Rhizobium meliloti (strain 1021)</name>
    <name type="common">Ensifer meliloti</name>
    <name type="synonym">Sinorhizobium meliloti</name>
    <dbReference type="NCBI Taxonomy" id="266834"/>
    <lineage>
        <taxon>Bacteria</taxon>
        <taxon>Pseudomonadati</taxon>
        <taxon>Pseudomonadota</taxon>
        <taxon>Alphaproteobacteria</taxon>
        <taxon>Hyphomicrobiales</taxon>
        <taxon>Rhizobiaceae</taxon>
        <taxon>Sinorhizobium/Ensifer group</taxon>
        <taxon>Sinorhizobium</taxon>
    </lineage>
</organism>
<name>PANC_RHIME</name>
<protein>
    <recommendedName>
        <fullName evidence="1">Pantothenate synthetase</fullName>
        <shortName evidence="1">PS</shortName>
        <ecNumber evidence="1">6.3.2.1</ecNumber>
    </recommendedName>
    <alternativeName>
        <fullName evidence="1">Pantoate--beta-alanine ligase</fullName>
    </alternativeName>
    <alternativeName>
        <fullName evidence="1">Pantoate-activating enzyme</fullName>
    </alternativeName>
</protein>
<gene>
    <name evidence="1" type="primary">panC</name>
    <name type="ordered locus">R02162</name>
    <name type="ORF">SMc01880</name>
</gene>
<keyword id="KW-0067">ATP-binding</keyword>
<keyword id="KW-0963">Cytoplasm</keyword>
<keyword id="KW-0436">Ligase</keyword>
<keyword id="KW-0547">Nucleotide-binding</keyword>
<keyword id="KW-0566">Pantothenate biosynthesis</keyword>
<keyword id="KW-1185">Reference proteome</keyword>
<reference key="1">
    <citation type="journal article" date="2001" name="Proc. Natl. Acad. Sci. U.S.A.">
        <title>Analysis of the chromosome sequence of the legume symbiont Sinorhizobium meliloti strain 1021.</title>
        <authorList>
            <person name="Capela D."/>
            <person name="Barloy-Hubler F."/>
            <person name="Gouzy J."/>
            <person name="Bothe G."/>
            <person name="Ampe F."/>
            <person name="Batut J."/>
            <person name="Boistard P."/>
            <person name="Becker A."/>
            <person name="Boutry M."/>
            <person name="Cadieu E."/>
            <person name="Dreano S."/>
            <person name="Gloux S."/>
            <person name="Godrie T."/>
            <person name="Goffeau A."/>
            <person name="Kahn D."/>
            <person name="Kiss E."/>
            <person name="Lelaure V."/>
            <person name="Masuy D."/>
            <person name="Pohl T."/>
            <person name="Portetelle D."/>
            <person name="Puehler A."/>
            <person name="Purnelle B."/>
            <person name="Ramsperger U."/>
            <person name="Renard C."/>
            <person name="Thebault P."/>
            <person name="Vandenbol M."/>
            <person name="Weidner S."/>
            <person name="Galibert F."/>
        </authorList>
    </citation>
    <scope>NUCLEOTIDE SEQUENCE [LARGE SCALE GENOMIC DNA]</scope>
    <source>
        <strain>1021</strain>
    </source>
</reference>
<reference key="2">
    <citation type="journal article" date="2001" name="Science">
        <title>The composite genome of the legume symbiont Sinorhizobium meliloti.</title>
        <authorList>
            <person name="Galibert F."/>
            <person name="Finan T.M."/>
            <person name="Long S.R."/>
            <person name="Puehler A."/>
            <person name="Abola P."/>
            <person name="Ampe F."/>
            <person name="Barloy-Hubler F."/>
            <person name="Barnett M.J."/>
            <person name="Becker A."/>
            <person name="Boistard P."/>
            <person name="Bothe G."/>
            <person name="Boutry M."/>
            <person name="Bowser L."/>
            <person name="Buhrmester J."/>
            <person name="Cadieu E."/>
            <person name="Capela D."/>
            <person name="Chain P."/>
            <person name="Cowie A."/>
            <person name="Davis R.W."/>
            <person name="Dreano S."/>
            <person name="Federspiel N.A."/>
            <person name="Fisher R.F."/>
            <person name="Gloux S."/>
            <person name="Godrie T."/>
            <person name="Goffeau A."/>
            <person name="Golding B."/>
            <person name="Gouzy J."/>
            <person name="Gurjal M."/>
            <person name="Hernandez-Lucas I."/>
            <person name="Hong A."/>
            <person name="Huizar L."/>
            <person name="Hyman R.W."/>
            <person name="Jones T."/>
            <person name="Kahn D."/>
            <person name="Kahn M.L."/>
            <person name="Kalman S."/>
            <person name="Keating D.H."/>
            <person name="Kiss E."/>
            <person name="Komp C."/>
            <person name="Lelaure V."/>
            <person name="Masuy D."/>
            <person name="Palm C."/>
            <person name="Peck M.C."/>
            <person name="Pohl T.M."/>
            <person name="Portetelle D."/>
            <person name="Purnelle B."/>
            <person name="Ramsperger U."/>
            <person name="Surzycki R."/>
            <person name="Thebault P."/>
            <person name="Vandenbol M."/>
            <person name="Vorhoelter F.J."/>
            <person name="Weidner S."/>
            <person name="Wells D.H."/>
            <person name="Wong K."/>
            <person name="Yeh K.-C."/>
            <person name="Batut J."/>
        </authorList>
    </citation>
    <scope>NUCLEOTIDE SEQUENCE [LARGE SCALE GENOMIC DNA]</scope>
    <source>
        <strain>1021</strain>
    </source>
</reference>
<accession>Q92NN0</accession>
<comment type="function">
    <text evidence="1">Catalyzes the condensation of pantoate with beta-alanine in an ATP-dependent reaction via a pantoyl-adenylate intermediate.</text>
</comment>
<comment type="catalytic activity">
    <reaction evidence="1">
        <text>(R)-pantoate + beta-alanine + ATP = (R)-pantothenate + AMP + diphosphate + H(+)</text>
        <dbReference type="Rhea" id="RHEA:10912"/>
        <dbReference type="ChEBI" id="CHEBI:15378"/>
        <dbReference type="ChEBI" id="CHEBI:15980"/>
        <dbReference type="ChEBI" id="CHEBI:29032"/>
        <dbReference type="ChEBI" id="CHEBI:30616"/>
        <dbReference type="ChEBI" id="CHEBI:33019"/>
        <dbReference type="ChEBI" id="CHEBI:57966"/>
        <dbReference type="ChEBI" id="CHEBI:456215"/>
        <dbReference type="EC" id="6.3.2.1"/>
    </reaction>
</comment>
<comment type="pathway">
    <text evidence="1">Cofactor biosynthesis; (R)-pantothenate biosynthesis; (R)-pantothenate from (R)-pantoate and beta-alanine: step 1/1.</text>
</comment>
<comment type="subunit">
    <text evidence="1">Homodimer.</text>
</comment>
<comment type="subcellular location">
    <subcellularLocation>
        <location evidence="1">Cytoplasm</location>
    </subcellularLocation>
</comment>
<comment type="miscellaneous">
    <text evidence="1">The reaction proceeds by a bi uni uni bi ping pong mechanism.</text>
</comment>
<comment type="similarity">
    <text evidence="1">Belongs to the pantothenate synthetase family.</text>
</comment>